<reference key="1">
    <citation type="journal article" date="2005" name="J. Bacteriol.">
        <title>Completion of the genome sequence of Brucella abortus and comparison to the highly similar genomes of Brucella melitensis and Brucella suis.</title>
        <authorList>
            <person name="Halling S.M."/>
            <person name="Peterson-Burch B.D."/>
            <person name="Bricker B.J."/>
            <person name="Zuerner R.L."/>
            <person name="Qing Z."/>
            <person name="Li L.-L."/>
            <person name="Kapur V."/>
            <person name="Alt D.P."/>
            <person name="Olsen S.C."/>
        </authorList>
    </citation>
    <scope>NUCLEOTIDE SEQUENCE [LARGE SCALE GENOMIC DNA]</scope>
    <source>
        <strain>9-941</strain>
    </source>
</reference>
<organism>
    <name type="scientific">Brucella abortus biovar 1 (strain 9-941)</name>
    <dbReference type="NCBI Taxonomy" id="262698"/>
    <lineage>
        <taxon>Bacteria</taxon>
        <taxon>Pseudomonadati</taxon>
        <taxon>Pseudomonadota</taxon>
        <taxon>Alphaproteobacteria</taxon>
        <taxon>Hyphomicrobiales</taxon>
        <taxon>Brucellaceae</taxon>
        <taxon>Brucella/Ochrobactrum group</taxon>
        <taxon>Brucella</taxon>
    </lineage>
</organism>
<keyword id="KW-0963">Cytoplasm</keyword>
<keyword id="KW-0441">Lipid A biosynthesis</keyword>
<keyword id="KW-0444">Lipid biosynthesis</keyword>
<keyword id="KW-0443">Lipid metabolism</keyword>
<keyword id="KW-0456">Lyase</keyword>
<evidence type="ECO:0000255" key="1">
    <source>
        <dbReference type="HAMAP-Rule" id="MF_00406"/>
    </source>
</evidence>
<gene>
    <name evidence="1" type="primary">fabZ</name>
    <name type="ordered locus">BruAb1_1158</name>
</gene>
<proteinExistence type="inferred from homology"/>
<feature type="chain" id="PRO_0000091649" description="3-hydroxyacyl-[acyl-carrier-protein] dehydratase FabZ">
    <location>
        <begin position="1"/>
        <end position="157"/>
    </location>
</feature>
<feature type="active site" evidence="1">
    <location>
        <position position="58"/>
    </location>
</feature>
<name>FABZ_BRUAB</name>
<protein>
    <recommendedName>
        <fullName evidence="1">3-hydroxyacyl-[acyl-carrier-protein] dehydratase FabZ</fullName>
        <ecNumber evidence="1">4.2.1.59</ecNumber>
    </recommendedName>
    <alternativeName>
        <fullName evidence="1">(3R)-hydroxymyristoyl-[acyl-carrier-protein] dehydratase</fullName>
        <shortName evidence="1">(3R)-hydroxymyristoyl-ACP dehydrase</shortName>
    </alternativeName>
    <alternativeName>
        <fullName evidence="1">Beta-hydroxyacyl-ACP dehydratase</fullName>
    </alternativeName>
</protein>
<accession>P0C104</accession>
<accession>Q44631</accession>
<accession>Q57CY7</accession>
<sequence length="157" mass="17214">MSDDNQTKLEAADIQALLAVLPHRYPFLLIDRIVDIDGDVSATGIKNVTINEPHFTGHFPENPIMPGVLIVEAMAQTAGAISLLQRKTGRPGVVYFMTIDNAKFRRPVVPGDRLLLYVKKIKQRANISKYECVAEVDGVKVAEAEVAAMISVADENL</sequence>
<comment type="function">
    <text evidence="1">Involved in unsaturated fatty acids biosynthesis. Catalyzes the dehydration of short chain beta-hydroxyacyl-ACPs and long chain saturated and unsaturated beta-hydroxyacyl-ACPs.</text>
</comment>
<comment type="catalytic activity">
    <reaction evidence="1">
        <text>a (3R)-hydroxyacyl-[ACP] = a (2E)-enoyl-[ACP] + H2O</text>
        <dbReference type="Rhea" id="RHEA:13097"/>
        <dbReference type="Rhea" id="RHEA-COMP:9925"/>
        <dbReference type="Rhea" id="RHEA-COMP:9945"/>
        <dbReference type="ChEBI" id="CHEBI:15377"/>
        <dbReference type="ChEBI" id="CHEBI:78784"/>
        <dbReference type="ChEBI" id="CHEBI:78827"/>
        <dbReference type="EC" id="4.2.1.59"/>
    </reaction>
</comment>
<comment type="subcellular location">
    <subcellularLocation>
        <location evidence="1">Cytoplasm</location>
    </subcellularLocation>
</comment>
<comment type="similarity">
    <text evidence="1">Belongs to the thioester dehydratase family. FabZ subfamily.</text>
</comment>
<dbReference type="EC" id="4.2.1.59" evidence="1"/>
<dbReference type="EMBL" id="AE017223">
    <property type="protein sequence ID" value="AAX74497.1"/>
    <property type="molecule type" value="Genomic_DNA"/>
</dbReference>
<dbReference type="RefSeq" id="WP_002964280.1">
    <property type="nucleotide sequence ID" value="NC_006932.1"/>
</dbReference>
<dbReference type="SMR" id="P0C104"/>
<dbReference type="EnsemblBacteria" id="AAX74497">
    <property type="protein sequence ID" value="AAX74497"/>
    <property type="gene ID" value="BruAb1_1158"/>
</dbReference>
<dbReference type="GeneID" id="93016513"/>
<dbReference type="KEGG" id="bmb:BruAb1_1158"/>
<dbReference type="HOGENOM" id="CLU_078912_1_2_5"/>
<dbReference type="Proteomes" id="UP000000540">
    <property type="component" value="Chromosome I"/>
</dbReference>
<dbReference type="GO" id="GO:0005737">
    <property type="term" value="C:cytoplasm"/>
    <property type="evidence" value="ECO:0007669"/>
    <property type="project" value="UniProtKB-SubCell"/>
</dbReference>
<dbReference type="GO" id="GO:0016020">
    <property type="term" value="C:membrane"/>
    <property type="evidence" value="ECO:0007669"/>
    <property type="project" value="GOC"/>
</dbReference>
<dbReference type="GO" id="GO:0019171">
    <property type="term" value="F:(3R)-hydroxyacyl-[acyl-carrier-protein] dehydratase activity"/>
    <property type="evidence" value="ECO:0007669"/>
    <property type="project" value="UniProtKB-EC"/>
</dbReference>
<dbReference type="GO" id="GO:0006633">
    <property type="term" value="P:fatty acid biosynthetic process"/>
    <property type="evidence" value="ECO:0007669"/>
    <property type="project" value="UniProtKB-UniRule"/>
</dbReference>
<dbReference type="GO" id="GO:0009245">
    <property type="term" value="P:lipid A biosynthetic process"/>
    <property type="evidence" value="ECO:0007669"/>
    <property type="project" value="UniProtKB-UniRule"/>
</dbReference>
<dbReference type="CDD" id="cd01288">
    <property type="entry name" value="FabZ"/>
    <property type="match status" value="1"/>
</dbReference>
<dbReference type="FunFam" id="3.10.129.10:FF:000001">
    <property type="entry name" value="3-hydroxyacyl-[acyl-carrier-protein] dehydratase FabZ"/>
    <property type="match status" value="1"/>
</dbReference>
<dbReference type="Gene3D" id="3.10.129.10">
    <property type="entry name" value="Hotdog Thioesterase"/>
    <property type="match status" value="1"/>
</dbReference>
<dbReference type="HAMAP" id="MF_00406">
    <property type="entry name" value="FabZ"/>
    <property type="match status" value="1"/>
</dbReference>
<dbReference type="InterPro" id="IPR013114">
    <property type="entry name" value="FabA_FabZ"/>
</dbReference>
<dbReference type="InterPro" id="IPR010084">
    <property type="entry name" value="FabZ"/>
</dbReference>
<dbReference type="InterPro" id="IPR029069">
    <property type="entry name" value="HotDog_dom_sf"/>
</dbReference>
<dbReference type="NCBIfam" id="TIGR01750">
    <property type="entry name" value="fabZ"/>
    <property type="match status" value="1"/>
</dbReference>
<dbReference type="NCBIfam" id="NF000582">
    <property type="entry name" value="PRK00006.1"/>
    <property type="match status" value="1"/>
</dbReference>
<dbReference type="PANTHER" id="PTHR30272">
    <property type="entry name" value="3-HYDROXYACYL-[ACYL-CARRIER-PROTEIN] DEHYDRATASE"/>
    <property type="match status" value="1"/>
</dbReference>
<dbReference type="PANTHER" id="PTHR30272:SF1">
    <property type="entry name" value="3-HYDROXYACYL-[ACYL-CARRIER-PROTEIN] DEHYDRATASE"/>
    <property type="match status" value="1"/>
</dbReference>
<dbReference type="Pfam" id="PF07977">
    <property type="entry name" value="FabA"/>
    <property type="match status" value="1"/>
</dbReference>
<dbReference type="SUPFAM" id="SSF54637">
    <property type="entry name" value="Thioesterase/thiol ester dehydrase-isomerase"/>
    <property type="match status" value="1"/>
</dbReference>